<organism>
    <name type="scientific">Escherichia coli O45:K1 (strain S88 / ExPEC)</name>
    <dbReference type="NCBI Taxonomy" id="585035"/>
    <lineage>
        <taxon>Bacteria</taxon>
        <taxon>Pseudomonadati</taxon>
        <taxon>Pseudomonadota</taxon>
        <taxon>Gammaproteobacteria</taxon>
        <taxon>Enterobacterales</taxon>
        <taxon>Enterobacteriaceae</taxon>
        <taxon>Escherichia</taxon>
    </lineage>
</organism>
<sequence>MEYFDMRKMSVNLWRNAAGETREICTFPPAKRDFYWRASITSIAANGEFSLFPGMERIVTLLEGGEMFLESADRFNHTLKPLQPFSFAADLVVKAKLTAGQMSMDFNIMTRLDVCKAKVRIAERTFTTFGSRGGVVFVINGAWQLGDKLLTTDQGACWFDGRHTLRLLQPQGKLLFSEINWLAGHSPDQVQ</sequence>
<proteinExistence type="inferred from homology"/>
<accession>B7MAV3</accession>
<dbReference type="EMBL" id="CU928161">
    <property type="protein sequence ID" value="CAR03102.1"/>
    <property type="molecule type" value="Genomic_DNA"/>
</dbReference>
<dbReference type="RefSeq" id="WP_000455604.1">
    <property type="nucleotide sequence ID" value="NC_011742.1"/>
</dbReference>
<dbReference type="SMR" id="B7MAV3"/>
<dbReference type="KEGG" id="ecz:ECS88_1794"/>
<dbReference type="HOGENOM" id="CLU_090931_5_0_6"/>
<dbReference type="Proteomes" id="UP000000747">
    <property type="component" value="Chromosome"/>
</dbReference>
<dbReference type="CDD" id="cd20293">
    <property type="entry name" value="cupin_HutD_N"/>
    <property type="match status" value="1"/>
</dbReference>
<dbReference type="Gene3D" id="2.60.120.10">
    <property type="entry name" value="Jelly Rolls"/>
    <property type="match status" value="1"/>
</dbReference>
<dbReference type="HAMAP" id="MF_01591">
    <property type="entry name" value="Ves"/>
    <property type="match status" value="1"/>
</dbReference>
<dbReference type="InterPro" id="IPR014710">
    <property type="entry name" value="RmlC-like_jellyroll"/>
</dbReference>
<dbReference type="InterPro" id="IPR011051">
    <property type="entry name" value="RmlC_Cupin_sf"/>
</dbReference>
<dbReference type="InterPro" id="IPR010282">
    <property type="entry name" value="Uncharacterised_HutD/Ves"/>
</dbReference>
<dbReference type="InterPro" id="IPR023482">
    <property type="entry name" value="Uncharacterised_Ves"/>
</dbReference>
<dbReference type="NCBIfam" id="NF008488">
    <property type="entry name" value="PRK11396.1"/>
    <property type="match status" value="1"/>
</dbReference>
<dbReference type="PANTHER" id="PTHR37943">
    <property type="entry name" value="PROTEIN VES"/>
    <property type="match status" value="1"/>
</dbReference>
<dbReference type="PANTHER" id="PTHR37943:SF1">
    <property type="entry name" value="PROTEIN VES"/>
    <property type="match status" value="1"/>
</dbReference>
<dbReference type="Pfam" id="PF05962">
    <property type="entry name" value="HutD"/>
    <property type="match status" value="1"/>
</dbReference>
<dbReference type="SUPFAM" id="SSF51182">
    <property type="entry name" value="RmlC-like cupins"/>
    <property type="match status" value="1"/>
</dbReference>
<comment type="similarity">
    <text evidence="1">Belongs to the Ves family.</text>
</comment>
<feature type="chain" id="PRO_1000201503" description="Protein Ves">
    <location>
        <begin position="1"/>
        <end position="191"/>
    </location>
</feature>
<evidence type="ECO:0000255" key="1">
    <source>
        <dbReference type="HAMAP-Rule" id="MF_01591"/>
    </source>
</evidence>
<name>VES_ECO45</name>
<gene>
    <name evidence="1" type="primary">ves</name>
    <name type="ordered locus">ECS88_1794</name>
</gene>
<protein>
    <recommendedName>
        <fullName evidence="1">Protein Ves</fullName>
    </recommendedName>
</protein>
<reference key="1">
    <citation type="journal article" date="2009" name="PLoS Genet.">
        <title>Organised genome dynamics in the Escherichia coli species results in highly diverse adaptive paths.</title>
        <authorList>
            <person name="Touchon M."/>
            <person name="Hoede C."/>
            <person name="Tenaillon O."/>
            <person name="Barbe V."/>
            <person name="Baeriswyl S."/>
            <person name="Bidet P."/>
            <person name="Bingen E."/>
            <person name="Bonacorsi S."/>
            <person name="Bouchier C."/>
            <person name="Bouvet O."/>
            <person name="Calteau A."/>
            <person name="Chiapello H."/>
            <person name="Clermont O."/>
            <person name="Cruveiller S."/>
            <person name="Danchin A."/>
            <person name="Diard M."/>
            <person name="Dossat C."/>
            <person name="Karoui M.E."/>
            <person name="Frapy E."/>
            <person name="Garry L."/>
            <person name="Ghigo J.M."/>
            <person name="Gilles A.M."/>
            <person name="Johnson J."/>
            <person name="Le Bouguenec C."/>
            <person name="Lescat M."/>
            <person name="Mangenot S."/>
            <person name="Martinez-Jehanne V."/>
            <person name="Matic I."/>
            <person name="Nassif X."/>
            <person name="Oztas S."/>
            <person name="Petit M.A."/>
            <person name="Pichon C."/>
            <person name="Rouy Z."/>
            <person name="Ruf C.S."/>
            <person name="Schneider D."/>
            <person name="Tourret J."/>
            <person name="Vacherie B."/>
            <person name="Vallenet D."/>
            <person name="Medigue C."/>
            <person name="Rocha E.P.C."/>
            <person name="Denamur E."/>
        </authorList>
    </citation>
    <scope>NUCLEOTIDE SEQUENCE [LARGE SCALE GENOMIC DNA]</scope>
    <source>
        <strain>S88 / ExPEC</strain>
    </source>
</reference>
<keyword id="KW-1185">Reference proteome</keyword>